<proteinExistence type="evidence at protein level"/>
<gene>
    <name evidence="9" type="primary">crn-5</name>
    <name evidence="9" type="ORF">C14A4.5</name>
</gene>
<dbReference type="EMBL" id="AY303579">
    <property type="protein sequence ID" value="AAP57301.1"/>
    <property type="molecule type" value="mRNA"/>
</dbReference>
<dbReference type="EMBL" id="BX284602">
    <property type="protein sequence ID" value="CAA90109.1"/>
    <property type="molecule type" value="Genomic_DNA"/>
</dbReference>
<dbReference type="PIR" id="T19247">
    <property type="entry name" value="T19247"/>
</dbReference>
<dbReference type="RefSeq" id="NP_496284.1">
    <property type="nucleotide sequence ID" value="NM_063883.4"/>
</dbReference>
<dbReference type="PDB" id="3KRN">
    <property type="method" value="X-ray"/>
    <property type="resolution" value="3.92 A"/>
    <property type="chains" value="A/B=1-214"/>
</dbReference>
<dbReference type="PDBsum" id="3KRN"/>
<dbReference type="SMR" id="G5EG59"/>
<dbReference type="FunCoup" id="G5EG59">
    <property type="interactions" value="1060"/>
</dbReference>
<dbReference type="IntAct" id="G5EG59">
    <property type="interactions" value="1"/>
</dbReference>
<dbReference type="STRING" id="6239.C14A4.5.1"/>
<dbReference type="PaxDb" id="6239-C14A4.5"/>
<dbReference type="PeptideAtlas" id="G5EG59"/>
<dbReference type="EnsemblMetazoa" id="C14A4.5.1">
    <property type="protein sequence ID" value="C14A4.5.1"/>
    <property type="gene ID" value="WBGene00000798"/>
</dbReference>
<dbReference type="GeneID" id="174634"/>
<dbReference type="KEGG" id="cel:CELE_C14A4.5"/>
<dbReference type="AGR" id="WB:WBGene00000798"/>
<dbReference type="CTD" id="174634"/>
<dbReference type="WormBase" id="C14A4.5">
    <property type="protein sequence ID" value="CE02146"/>
    <property type="gene ID" value="WBGene00000798"/>
    <property type="gene designation" value="crn-5"/>
</dbReference>
<dbReference type="eggNOG" id="KOG1069">
    <property type="taxonomic scope" value="Eukaryota"/>
</dbReference>
<dbReference type="GeneTree" id="ENSGT00940000153348"/>
<dbReference type="HOGENOM" id="CLU_063514_2_3_1"/>
<dbReference type="OMA" id="SYKCPAT"/>
<dbReference type="OrthoDB" id="27298at2759"/>
<dbReference type="Reactome" id="R-CEL-429958">
    <property type="pathway name" value="mRNA decay by 3' to 5' exoribonuclease"/>
</dbReference>
<dbReference type="Reactome" id="R-CEL-450385">
    <property type="pathway name" value="Butyrate Response Factor 1 (BRF1) binds and destabilizes mRNA"/>
</dbReference>
<dbReference type="Reactome" id="R-CEL-450513">
    <property type="pathway name" value="Tristetraprolin (TTP, ZFP36) binds and destabilizes mRNA"/>
</dbReference>
<dbReference type="Reactome" id="R-CEL-6791226">
    <property type="pathway name" value="Major pathway of rRNA processing in the nucleolus and cytosol"/>
</dbReference>
<dbReference type="EvolutionaryTrace" id="G5EG59"/>
<dbReference type="PRO" id="PR:G5EG59"/>
<dbReference type="Proteomes" id="UP000001940">
    <property type="component" value="Chromosome II"/>
</dbReference>
<dbReference type="Bgee" id="WBGene00000798">
    <property type="expression patterns" value="Expressed in germ line (C elegans) and 4 other cell types or tissues"/>
</dbReference>
<dbReference type="GO" id="GO:0000177">
    <property type="term" value="C:cytoplasmic exosome (RNase complex)"/>
    <property type="evidence" value="ECO:0000318"/>
    <property type="project" value="GO_Central"/>
</dbReference>
<dbReference type="GO" id="GO:0000178">
    <property type="term" value="C:exosome (RNase complex)"/>
    <property type="evidence" value="ECO:0000315"/>
    <property type="project" value="WormBase"/>
</dbReference>
<dbReference type="GO" id="GO:0000176">
    <property type="term" value="C:nuclear exosome (RNase complex)"/>
    <property type="evidence" value="ECO:0000318"/>
    <property type="project" value="GO_Central"/>
</dbReference>
<dbReference type="GO" id="GO:0005730">
    <property type="term" value="C:nucleolus"/>
    <property type="evidence" value="ECO:0000318"/>
    <property type="project" value="GO_Central"/>
</dbReference>
<dbReference type="GO" id="GO:0008408">
    <property type="term" value="F:3'-5' exonuclease activity"/>
    <property type="evidence" value="ECO:0000250"/>
    <property type="project" value="WormBase"/>
</dbReference>
<dbReference type="GO" id="GO:0003690">
    <property type="term" value="F:double-stranded DNA binding"/>
    <property type="evidence" value="ECO:0000314"/>
    <property type="project" value="WormBase"/>
</dbReference>
<dbReference type="GO" id="GO:0019899">
    <property type="term" value="F:enzyme binding"/>
    <property type="evidence" value="ECO:0000353"/>
    <property type="project" value="WormBase"/>
</dbReference>
<dbReference type="GO" id="GO:0003723">
    <property type="term" value="F:RNA binding"/>
    <property type="evidence" value="ECO:0000318"/>
    <property type="project" value="GO_Central"/>
</dbReference>
<dbReference type="GO" id="GO:0006309">
    <property type="term" value="P:apoptotic DNA fragmentation"/>
    <property type="evidence" value="ECO:0000315"/>
    <property type="project" value="WormBase"/>
</dbReference>
<dbReference type="GO" id="GO:0071028">
    <property type="term" value="P:nuclear mRNA surveillance"/>
    <property type="evidence" value="ECO:0000318"/>
    <property type="project" value="GO_Central"/>
</dbReference>
<dbReference type="GO" id="GO:0071051">
    <property type="term" value="P:poly(A)-dependent snoRNA 3'-end processing"/>
    <property type="evidence" value="ECO:0000318"/>
    <property type="project" value="GO_Central"/>
</dbReference>
<dbReference type="GO" id="GO:0006396">
    <property type="term" value="P:RNA processing"/>
    <property type="evidence" value="ECO:0000315"/>
    <property type="project" value="WormBase"/>
</dbReference>
<dbReference type="GO" id="GO:0016075">
    <property type="term" value="P:rRNA catabolic process"/>
    <property type="evidence" value="ECO:0000318"/>
    <property type="project" value="GO_Central"/>
</dbReference>
<dbReference type="GO" id="GO:0006364">
    <property type="term" value="P:rRNA processing"/>
    <property type="evidence" value="ECO:0007669"/>
    <property type="project" value="UniProtKB-KW"/>
</dbReference>
<dbReference type="GO" id="GO:0034475">
    <property type="term" value="P:U4 snRNA 3'-end processing"/>
    <property type="evidence" value="ECO:0000318"/>
    <property type="project" value="GO_Central"/>
</dbReference>
<dbReference type="CDD" id="cd11372">
    <property type="entry name" value="RNase_PH_RRP46"/>
    <property type="match status" value="1"/>
</dbReference>
<dbReference type="Gene3D" id="3.30.230.70">
    <property type="entry name" value="GHMP Kinase, N-terminal domain"/>
    <property type="match status" value="1"/>
</dbReference>
<dbReference type="InterPro" id="IPR001247">
    <property type="entry name" value="ExoRNase_PH_dom1"/>
</dbReference>
<dbReference type="InterPro" id="IPR015847">
    <property type="entry name" value="ExoRNase_PH_dom2"/>
</dbReference>
<dbReference type="InterPro" id="IPR036345">
    <property type="entry name" value="ExoRNase_PH_dom2_sf"/>
</dbReference>
<dbReference type="InterPro" id="IPR027408">
    <property type="entry name" value="PNPase/RNase_PH_dom_sf"/>
</dbReference>
<dbReference type="InterPro" id="IPR020568">
    <property type="entry name" value="Ribosomal_Su5_D2-typ_SF"/>
</dbReference>
<dbReference type="InterPro" id="IPR050080">
    <property type="entry name" value="RNase_PH"/>
</dbReference>
<dbReference type="PANTHER" id="PTHR11953">
    <property type="entry name" value="EXOSOME COMPLEX COMPONENT"/>
    <property type="match status" value="1"/>
</dbReference>
<dbReference type="PANTHER" id="PTHR11953:SF1">
    <property type="entry name" value="EXOSOME COMPLEX COMPONENT RRP46"/>
    <property type="match status" value="1"/>
</dbReference>
<dbReference type="Pfam" id="PF01138">
    <property type="entry name" value="RNase_PH"/>
    <property type="match status" value="1"/>
</dbReference>
<dbReference type="Pfam" id="PF03725">
    <property type="entry name" value="RNase_PH_C"/>
    <property type="match status" value="1"/>
</dbReference>
<dbReference type="SUPFAM" id="SSF55666">
    <property type="entry name" value="Ribonuclease PH domain 2-like"/>
    <property type="match status" value="1"/>
</dbReference>
<dbReference type="SUPFAM" id="SSF54211">
    <property type="entry name" value="Ribosomal protein S5 domain 2-like"/>
    <property type="match status" value="1"/>
</dbReference>
<dbReference type="PROSITE" id="PS51257">
    <property type="entry name" value="PROKAR_LIPOPROTEIN"/>
    <property type="match status" value="1"/>
</dbReference>
<sequence length="214" mass="23015">MAGRLREMRCELSFLKNADGSACFSQGATCIWASCSGPGDVHASKASDEAMTLDISYRANCGDNKFNVLNNIIHSTLSNAINLELFPHTTISVTVHGIQDDGSMGAVAINGACFALLDNGMPFETVFCGVLIVRVKDELIIDPTAKQEAASTGRVLFSVCKGSDGHPEVCAMDAIGHWDFIQLEAAWSLAQPSASAIFDFYKTVMKRKLSVDEQ</sequence>
<name>EXOS5_CAEEL</name>
<accession>G5EG59</accession>
<comment type="function">
    <text evidence="1 2 3">Non-catalytic component of the RNA exosome complex which has 3'-&gt;5' exoribonuclease activity and participates in a multitude of cellular RNA processing and degradation events (By similarity). Involved in apoptotic DNA degradation (PubMed:12718884). In vitro, does not bind or digest single-stranded RNA (PubMed:20660080). In vitro, binds to double-stranded DNA without detectable DNase activity (PubMed:20660080).</text>
</comment>
<comment type="subunit">
    <text evidence="1 2 3">Homodimer (PubMed:12718884, PubMed:20660080). Component of the RNA exosome complex (By similarity). Interacts with crn-4; interaction promotes the DNase activity of crn-4 (PubMed:12718884, PubMed:20660080). Interacts with crn-3, cps-6 and cyn-13 (PubMed:12718884).</text>
</comment>
<comment type="subcellular location">
    <subcellularLocation>
        <location evidence="1">Cytoplasm</location>
    </subcellularLocation>
    <subcellularLocation>
        <location evidence="1">Nucleus</location>
    </subcellularLocation>
</comment>
<comment type="disruption phenotype">
    <text evidence="2">RNAi-mediated knockdown results in retarded growth, accumulation of apoptotic DNA in 1.5-fold stage embryos and delayed appearance of embryonic cell corpses during development.</text>
</comment>
<comment type="similarity">
    <text evidence="5">Belongs to the RNase PH family.</text>
</comment>
<evidence type="ECO:0000250" key="1">
    <source>
        <dbReference type="UniProtKB" id="Q9NQT4"/>
    </source>
</evidence>
<evidence type="ECO:0000269" key="2">
    <source>
    </source>
</evidence>
<evidence type="ECO:0000269" key="3">
    <source>
    </source>
</evidence>
<evidence type="ECO:0000303" key="4">
    <source>
    </source>
</evidence>
<evidence type="ECO:0000305" key="5"/>
<evidence type="ECO:0000312" key="6">
    <source>
        <dbReference type="EMBL" id="AAP57301.1"/>
    </source>
</evidence>
<evidence type="ECO:0000312" key="7">
    <source>
        <dbReference type="PDB" id="3KRN"/>
    </source>
</evidence>
<evidence type="ECO:0000312" key="8">
    <source>
        <dbReference type="Proteomes" id="UP000001940"/>
    </source>
</evidence>
<evidence type="ECO:0000312" key="9">
    <source>
        <dbReference type="WormBase" id="C14A4.5"/>
    </source>
</evidence>
<feature type="chain" id="PRO_0000458899" description="Exosome complex component RRP46 homolog">
    <location>
        <begin position="1"/>
        <end position="214"/>
    </location>
</feature>
<protein>
    <recommendedName>
        <fullName evidence="5">Exosome complex component RRP46 homolog</fullName>
    </recommendedName>
    <alternativeName>
        <fullName evidence="4">Cell death-related nuclease 5</fullName>
    </alternativeName>
</protein>
<organism evidence="8">
    <name type="scientific">Caenorhabditis elegans</name>
    <dbReference type="NCBI Taxonomy" id="6239"/>
    <lineage>
        <taxon>Eukaryota</taxon>
        <taxon>Metazoa</taxon>
        <taxon>Ecdysozoa</taxon>
        <taxon>Nematoda</taxon>
        <taxon>Chromadorea</taxon>
        <taxon>Rhabditida</taxon>
        <taxon>Rhabditina</taxon>
        <taxon>Rhabditomorpha</taxon>
        <taxon>Rhabditoidea</taxon>
        <taxon>Rhabditidae</taxon>
        <taxon>Peloderinae</taxon>
        <taxon>Caenorhabditis</taxon>
    </lineage>
</organism>
<keyword id="KW-0002">3D-structure</keyword>
<keyword id="KW-0053">Apoptosis</keyword>
<keyword id="KW-0963">Cytoplasm</keyword>
<keyword id="KW-0238">DNA-binding</keyword>
<keyword id="KW-0271">Exosome</keyword>
<keyword id="KW-0539">Nucleus</keyword>
<keyword id="KW-1185">Reference proteome</keyword>
<keyword id="KW-0698">rRNA processing</keyword>
<reference evidence="6" key="1">
    <citation type="journal article" date="2003" name="Mol. Cell">
        <title>Functional genomic analysis of apoptotic DNA degradation in C. elegans.</title>
        <authorList>
            <person name="Parrish J.Z."/>
            <person name="Xue D."/>
        </authorList>
    </citation>
    <scope>NUCLEOTIDE SEQUENCE [MRNA]</scope>
    <scope>FUNCTION</scope>
    <scope>INTERACTION WITH CRN-4; CRN-3; CPS-6 AND CYN-13</scope>
    <scope>DISRUPTION PHENOTYPE</scope>
</reference>
<reference evidence="8" key="2">
    <citation type="journal article" date="1998" name="Science">
        <title>Genome sequence of the nematode C. elegans: a platform for investigating biology.</title>
        <authorList>
            <consortium name="The C. elegans sequencing consortium"/>
        </authorList>
    </citation>
    <scope>NUCLEOTIDE SEQUENCE [LARGE SCALE GENOMIC DNA]</scope>
    <source>
        <strain evidence="8">Bristol N2</strain>
    </source>
</reference>
<reference evidence="7" key="3">
    <citation type="journal article" date="2010" name="RNA">
        <title>Structural and biochemical characterization of CRN-5 and Rrp46: an exosome component participating in apoptotic DNA degradation.</title>
        <authorList>
            <person name="Yang C.C."/>
            <person name="Wang Y.T."/>
            <person name="Hsiao Y.Y."/>
            <person name="Doudeva L.G."/>
            <person name="Kuo P.H."/>
            <person name="Chow S.Y."/>
            <person name="Yuan H.S."/>
        </authorList>
    </citation>
    <scope>X-RAY CRYSTALLOGRAPHY (3.92 ANGSTROMS)</scope>
    <scope>FUNCTION</scope>
    <scope>INTERACTION WITH CRN-4</scope>
</reference>